<accession>Q6MTU2</accession>
<organism>
    <name type="scientific">Mycoplasma mycoides subsp. mycoides SC (strain CCUG 32753 / NCTC 10114 / PG1)</name>
    <dbReference type="NCBI Taxonomy" id="272632"/>
    <lineage>
        <taxon>Bacteria</taxon>
        <taxon>Bacillati</taxon>
        <taxon>Mycoplasmatota</taxon>
        <taxon>Mollicutes</taxon>
        <taxon>Mycoplasmataceae</taxon>
        <taxon>Mycoplasma</taxon>
    </lineage>
</organism>
<reference key="1">
    <citation type="journal article" date="2004" name="Genome Res.">
        <title>The genome sequence of Mycoplasma mycoides subsp. mycoides SC type strain PG1T, the causative agent of contagious bovine pleuropneumonia (CBPP).</title>
        <authorList>
            <person name="Westberg J."/>
            <person name="Persson A."/>
            <person name="Holmberg A."/>
            <person name="Goesmann A."/>
            <person name="Lundeberg J."/>
            <person name="Johansson K.-E."/>
            <person name="Pettersson B."/>
            <person name="Uhlen M."/>
        </authorList>
    </citation>
    <scope>NUCLEOTIDE SEQUENCE [LARGE SCALE GENOMIC DNA]</scope>
    <source>
        <strain>CCUG 32753 / NCTC 10114 / PG1</strain>
    </source>
</reference>
<proteinExistence type="inferred from homology"/>
<protein>
    <recommendedName>
        <fullName evidence="1">Valine--tRNA ligase</fullName>
        <ecNumber evidence="1">6.1.1.9</ecNumber>
    </recommendedName>
    <alternativeName>
        <fullName evidence="1">Valyl-tRNA synthetase</fullName>
        <shortName evidence="1">ValRS</shortName>
    </alternativeName>
</protein>
<gene>
    <name evidence="1" type="primary">valS</name>
    <name type="ordered locus">MSC_0303</name>
</gene>
<comment type="function">
    <text evidence="1">Catalyzes the attachment of valine to tRNA(Val). As ValRS can inadvertently accommodate and process structurally similar amino acids such as threonine, to avoid such errors, it has a 'posttransfer' editing activity that hydrolyzes mischarged Thr-tRNA(Val) in a tRNA-dependent manner.</text>
</comment>
<comment type="catalytic activity">
    <reaction evidence="1">
        <text>tRNA(Val) + L-valine + ATP = L-valyl-tRNA(Val) + AMP + diphosphate</text>
        <dbReference type="Rhea" id="RHEA:10704"/>
        <dbReference type="Rhea" id="RHEA-COMP:9672"/>
        <dbReference type="Rhea" id="RHEA-COMP:9708"/>
        <dbReference type="ChEBI" id="CHEBI:30616"/>
        <dbReference type="ChEBI" id="CHEBI:33019"/>
        <dbReference type="ChEBI" id="CHEBI:57762"/>
        <dbReference type="ChEBI" id="CHEBI:78442"/>
        <dbReference type="ChEBI" id="CHEBI:78537"/>
        <dbReference type="ChEBI" id="CHEBI:456215"/>
        <dbReference type="EC" id="6.1.1.9"/>
    </reaction>
</comment>
<comment type="subunit">
    <text evidence="1">Monomer.</text>
</comment>
<comment type="subcellular location">
    <subcellularLocation>
        <location evidence="1">Cytoplasm</location>
    </subcellularLocation>
</comment>
<comment type="domain">
    <text evidence="1">ValRS has two distinct active sites: one for aminoacylation and one for editing. The misactivated threonine is translocated from the active site to the editing site.</text>
</comment>
<comment type="domain">
    <text evidence="1">The C-terminal coiled-coil domain is crucial for aminoacylation activity.</text>
</comment>
<comment type="similarity">
    <text evidence="1">Belongs to the class-I aminoacyl-tRNA synthetase family. ValS type 1 subfamily.</text>
</comment>
<dbReference type="EC" id="6.1.1.9" evidence="1"/>
<dbReference type="EMBL" id="BX293980">
    <property type="protein sequence ID" value="CAE76944.1"/>
    <property type="molecule type" value="Genomic_DNA"/>
</dbReference>
<dbReference type="RefSeq" id="NP_975302.1">
    <property type="nucleotide sequence ID" value="NC_005364.2"/>
</dbReference>
<dbReference type="RefSeq" id="WP_011166500.1">
    <property type="nucleotide sequence ID" value="NC_005364.2"/>
</dbReference>
<dbReference type="SMR" id="Q6MTU2"/>
<dbReference type="STRING" id="272632.MSC_0303"/>
<dbReference type="KEGG" id="mmy:MSC_0303"/>
<dbReference type="PATRIC" id="fig|272632.4.peg.323"/>
<dbReference type="eggNOG" id="COG0525">
    <property type="taxonomic scope" value="Bacteria"/>
</dbReference>
<dbReference type="HOGENOM" id="CLU_001493_0_2_14"/>
<dbReference type="Proteomes" id="UP000001016">
    <property type="component" value="Chromosome"/>
</dbReference>
<dbReference type="GO" id="GO:0005829">
    <property type="term" value="C:cytosol"/>
    <property type="evidence" value="ECO:0007669"/>
    <property type="project" value="TreeGrafter"/>
</dbReference>
<dbReference type="GO" id="GO:0002161">
    <property type="term" value="F:aminoacyl-tRNA deacylase activity"/>
    <property type="evidence" value="ECO:0007669"/>
    <property type="project" value="InterPro"/>
</dbReference>
<dbReference type="GO" id="GO:0005524">
    <property type="term" value="F:ATP binding"/>
    <property type="evidence" value="ECO:0007669"/>
    <property type="project" value="UniProtKB-UniRule"/>
</dbReference>
<dbReference type="GO" id="GO:0004832">
    <property type="term" value="F:valine-tRNA ligase activity"/>
    <property type="evidence" value="ECO:0007669"/>
    <property type="project" value="UniProtKB-UniRule"/>
</dbReference>
<dbReference type="GO" id="GO:0006438">
    <property type="term" value="P:valyl-tRNA aminoacylation"/>
    <property type="evidence" value="ECO:0007669"/>
    <property type="project" value="UniProtKB-UniRule"/>
</dbReference>
<dbReference type="CDD" id="cd07962">
    <property type="entry name" value="Anticodon_Ia_Val"/>
    <property type="match status" value="1"/>
</dbReference>
<dbReference type="CDD" id="cd00817">
    <property type="entry name" value="ValRS_core"/>
    <property type="match status" value="1"/>
</dbReference>
<dbReference type="FunFam" id="3.40.50.620:FF:000032">
    <property type="entry name" value="Valine--tRNA ligase"/>
    <property type="match status" value="1"/>
</dbReference>
<dbReference type="FunFam" id="3.40.50.620:FF:000098">
    <property type="entry name" value="Valine--tRNA ligase"/>
    <property type="match status" value="1"/>
</dbReference>
<dbReference type="Gene3D" id="3.40.50.620">
    <property type="entry name" value="HUPs"/>
    <property type="match status" value="2"/>
</dbReference>
<dbReference type="Gene3D" id="1.10.730.10">
    <property type="entry name" value="Isoleucyl-tRNA Synthetase, Domain 1"/>
    <property type="match status" value="1"/>
</dbReference>
<dbReference type="Gene3D" id="1.10.287.380">
    <property type="entry name" value="Valyl-tRNA synthetase, C-terminal domain"/>
    <property type="match status" value="1"/>
</dbReference>
<dbReference type="Gene3D" id="3.90.740.10">
    <property type="entry name" value="Valyl/Leucyl/Isoleucyl-tRNA synthetase, editing domain"/>
    <property type="match status" value="1"/>
</dbReference>
<dbReference type="HAMAP" id="MF_02004">
    <property type="entry name" value="Val_tRNA_synth_type1"/>
    <property type="match status" value="1"/>
</dbReference>
<dbReference type="InterPro" id="IPR001412">
    <property type="entry name" value="aa-tRNA-synth_I_CS"/>
</dbReference>
<dbReference type="InterPro" id="IPR002300">
    <property type="entry name" value="aa-tRNA-synth_Ia"/>
</dbReference>
<dbReference type="InterPro" id="IPR033705">
    <property type="entry name" value="Anticodon_Ia_Val"/>
</dbReference>
<dbReference type="InterPro" id="IPR013155">
    <property type="entry name" value="M/V/L/I-tRNA-synth_anticd-bd"/>
</dbReference>
<dbReference type="InterPro" id="IPR014729">
    <property type="entry name" value="Rossmann-like_a/b/a_fold"/>
</dbReference>
<dbReference type="InterPro" id="IPR010978">
    <property type="entry name" value="tRNA-bd_arm"/>
</dbReference>
<dbReference type="InterPro" id="IPR009080">
    <property type="entry name" value="tRNAsynth_Ia_anticodon-bd"/>
</dbReference>
<dbReference type="InterPro" id="IPR037118">
    <property type="entry name" value="Val-tRNA_synth_C_sf"/>
</dbReference>
<dbReference type="InterPro" id="IPR009008">
    <property type="entry name" value="Val/Leu/Ile-tRNA-synth_edit"/>
</dbReference>
<dbReference type="InterPro" id="IPR002303">
    <property type="entry name" value="Valyl-tRNA_ligase"/>
</dbReference>
<dbReference type="NCBIfam" id="NF004349">
    <property type="entry name" value="PRK05729.1"/>
    <property type="match status" value="1"/>
</dbReference>
<dbReference type="NCBIfam" id="TIGR00422">
    <property type="entry name" value="valS"/>
    <property type="match status" value="1"/>
</dbReference>
<dbReference type="PANTHER" id="PTHR11946:SF93">
    <property type="entry name" value="VALINE--TRNA LIGASE, CHLOROPLASTIC_MITOCHONDRIAL 2"/>
    <property type="match status" value="1"/>
</dbReference>
<dbReference type="PANTHER" id="PTHR11946">
    <property type="entry name" value="VALYL-TRNA SYNTHETASES"/>
    <property type="match status" value="1"/>
</dbReference>
<dbReference type="Pfam" id="PF08264">
    <property type="entry name" value="Anticodon_1"/>
    <property type="match status" value="1"/>
</dbReference>
<dbReference type="Pfam" id="PF00133">
    <property type="entry name" value="tRNA-synt_1"/>
    <property type="match status" value="2"/>
</dbReference>
<dbReference type="PRINTS" id="PR00986">
    <property type="entry name" value="TRNASYNTHVAL"/>
</dbReference>
<dbReference type="SUPFAM" id="SSF47323">
    <property type="entry name" value="Anticodon-binding domain of a subclass of class I aminoacyl-tRNA synthetases"/>
    <property type="match status" value="1"/>
</dbReference>
<dbReference type="SUPFAM" id="SSF52374">
    <property type="entry name" value="Nucleotidylyl transferase"/>
    <property type="match status" value="1"/>
</dbReference>
<dbReference type="SUPFAM" id="SSF46589">
    <property type="entry name" value="tRNA-binding arm"/>
    <property type="match status" value="1"/>
</dbReference>
<dbReference type="SUPFAM" id="SSF50677">
    <property type="entry name" value="ValRS/IleRS/LeuRS editing domain"/>
    <property type="match status" value="1"/>
</dbReference>
<dbReference type="PROSITE" id="PS00178">
    <property type="entry name" value="AA_TRNA_LIGASE_I"/>
    <property type="match status" value="1"/>
</dbReference>
<keyword id="KW-0030">Aminoacyl-tRNA synthetase</keyword>
<keyword id="KW-0067">ATP-binding</keyword>
<keyword id="KW-0175">Coiled coil</keyword>
<keyword id="KW-0963">Cytoplasm</keyword>
<keyword id="KW-0436">Ligase</keyword>
<keyword id="KW-0547">Nucleotide-binding</keyword>
<keyword id="KW-0648">Protein biosynthesis</keyword>
<keyword id="KW-1185">Reference proteome</keyword>
<sequence>MKKQLNPKYDHLQVEKDKYQYWLDKNLFKADINSNKPKFSIILPPPNVTGKLHIGHAWDTSLQDAIIRFKKLTGYDTLFLPGMDHSGISTQVKVEAKLKQQGIDKNKLGREKFLLEAWKWKEEYANIIRKQWAKLGLSLDYSTEKFTLDEDINQIVKEIFVKFYNDQIIYKDKQIVNWDPEQKTAISNVEVIYKETQSKMYYFKYILEDSNEYLTVATTRPETMFADQCLVVNPNDSRYQKYINKKVINPVNKQVIPIISDEYVDIEFGTGVMKCTPAHDLNDYHLGIKHNLKMPICLNIDGSVNQLGGKYQGLDRFVARKKIIKNAIKEDLFVKEEDIINQVGFSERSNAIVEPYLSDQWFVKMDKFKNMVIDLQNSDNKINFYPNRFSDVLNRWMTDAHDWCISRQLWWGHQIPCWYHKKTNEMYVGINPPSDIENWTQDQDVLDTWFSSGLWAFSTLLNNKGLESEYFKNYFPTSVLVTGYDIIFFWVARMIFQTLEYTKQIPFKDVLIHGLVRDESNRKMSKSLGNGIDPMDVINNNGCDSLRLFLLTNSTPGQDIRYSNEKILASWNFINKLWNASRYVFLNLDEDFKFDPNFYKTDLEITNQWILTQLSKTQTYVYEKMNKYEFSLAGNHLWDFVWNKYCSWYIEFSKVNLNNDKFTHQTKQTLFYVLKEILIMLHPLIPFVSEEIYLNMMLKESILLEQWTNLNSNYDTSFIDDVIKMITSIREFRNTKNIKNDVCLSVNISNTNQNHTKLFKKHFDQIYNFLFNFCNTKLVDEAIKNKTSLSIDEYFIEIANDSFINKNELIKELEQKQNYLNNEITRSQKILNNQEFIKKAKPEKIQSEKIKYQNYLDQLQAIKDKLKELTND</sequence>
<name>SYV_MYCMS</name>
<feature type="chain" id="PRO_0000224512" description="Valine--tRNA ligase">
    <location>
        <begin position="1"/>
        <end position="872"/>
    </location>
</feature>
<feature type="coiled-coil region" evidence="1">
    <location>
        <begin position="796"/>
        <end position="872"/>
    </location>
</feature>
<feature type="short sequence motif" description="'HIGH' region">
    <location>
        <begin position="46"/>
        <end position="56"/>
    </location>
</feature>
<feature type="short sequence motif" description="'KMSKS' region">
    <location>
        <begin position="523"/>
        <end position="527"/>
    </location>
</feature>
<feature type="binding site" evidence="1">
    <location>
        <position position="526"/>
    </location>
    <ligand>
        <name>ATP</name>
        <dbReference type="ChEBI" id="CHEBI:30616"/>
    </ligand>
</feature>
<evidence type="ECO:0000255" key="1">
    <source>
        <dbReference type="HAMAP-Rule" id="MF_02004"/>
    </source>
</evidence>